<feature type="chain" id="PRO_0000078474" description="Chaperone protein DnaK">
    <location>
        <begin position="1"/>
        <end position="607"/>
    </location>
</feature>
<feature type="region of interest" description="Disordered" evidence="2">
    <location>
        <begin position="577"/>
        <end position="607"/>
    </location>
</feature>
<feature type="modified residue" description="Phosphothreonine; by autocatalysis" evidence="1">
    <location>
        <position position="173"/>
    </location>
</feature>
<comment type="function">
    <text evidence="1">Acts as a chaperone.</text>
</comment>
<comment type="induction">
    <text evidence="1">By stress conditions e.g. heat shock (By similarity).</text>
</comment>
<comment type="similarity">
    <text evidence="3">Belongs to the heat shock protein 70 family.</text>
</comment>
<evidence type="ECO:0000250" key="1"/>
<evidence type="ECO:0000256" key="2">
    <source>
        <dbReference type="SAM" id="MobiDB-lite"/>
    </source>
</evidence>
<evidence type="ECO:0000305" key="3"/>
<proteinExistence type="inferred from homology"/>
<keyword id="KW-0067">ATP-binding</keyword>
<keyword id="KW-0143">Chaperone</keyword>
<keyword id="KW-0547">Nucleotide-binding</keyword>
<keyword id="KW-0597">Phosphoprotein</keyword>
<keyword id="KW-0346">Stress response</keyword>
<accession>P0A3J1</accession>
<accession>A2RLI1</accession>
<accession>P42368</accession>
<accession>Q9CGY8</accession>
<gene>
    <name type="primary">dnaK</name>
    <name type="ordered locus">llmg_1574</name>
</gene>
<name>DNAK_LACLM</name>
<sequence>MSKIIGIDLGTTNSAVAVLEGTESKIIPNPEGNRTTPSVVAFKNGEIIVGDAAKRQAVTNPETIISIKSKMGTSEKVSANGKEYTPQEISAMILQNLKATAESYLGEKVEKAVITVPAYFNDAQRQATKDAGKIAGLEVERIVNEPTAAALAYGLDKTDKDEKILVFDLGGGTFDVSILELGDGVFDVLATAGNNKLGGDDFDQKIIDWMVAEFKKENGIDLGQDKMALQRLKDAAEKAKKDLSGVTTTQISLPFITAGAAGPLHLEMALTRAKFDELTHDLVEATRQPVRQALSDAGLSTSDIDEVLLVGGSTRIPAVVELVRHETNKEPNKSVNPDEVVAMGAAIQGGVITGDVKDVVLLDVTPLSLGIETMGGVFTKLIDRNTTIPTSKSQVFSTAADNQPAVDIHVLQGERPMAADNKTLGRFQLTDIPAAPRGIPQIEVTFDIDKNGIVSVKAKDLGTQKEQTIVIKSNSGLSDEEIDKMMKDAEANADADAKRKEEVDTRNEADALVFQTEKTLKDLEGKVEEAEVKKAEDAKEELKKALEGEDIDDIKAKSEALSEIAQNLAVKLYEQANAAQGEASEATDAQEGPKDANTFDGDFEESK</sequence>
<protein>
    <recommendedName>
        <fullName>Chaperone protein DnaK</fullName>
    </recommendedName>
    <alternativeName>
        <fullName>HSP70</fullName>
    </alternativeName>
    <alternativeName>
        <fullName>Heat shock 70 kDa protein</fullName>
    </alternativeName>
    <alternativeName>
        <fullName>Heat shock protein 70</fullName>
    </alternativeName>
</protein>
<reference key="1">
    <citation type="journal article" date="1993" name="J. Gen. Microbiol.">
        <title>Cloning and sequence analysis of the dnaK gene region of Lactococcus lactis subsp. lactis.</title>
        <authorList>
            <person name="Eaton T.J."/>
            <person name="Shearman C.A."/>
            <person name="Gasson M.J."/>
        </authorList>
    </citation>
    <scope>NUCLEOTIDE SEQUENCE [GENOMIC DNA]</scope>
</reference>
<reference key="2">
    <citation type="journal article" date="2007" name="J. Bacteriol.">
        <title>The complete genome sequence of the lactic acid bacterial paradigm Lactococcus lactis subsp. cremoris MG1363.</title>
        <authorList>
            <person name="Wegmann U."/>
            <person name="O'Connell-Motherway M."/>
            <person name="Zomer A."/>
            <person name="Buist G."/>
            <person name="Shearman C."/>
            <person name="Canchaya C."/>
            <person name="Ventura M."/>
            <person name="Goesmann A."/>
            <person name="Gasson M.J."/>
            <person name="Kuipers O.P."/>
            <person name="van Sinderen D."/>
            <person name="Kok J."/>
        </authorList>
    </citation>
    <scope>NUCLEOTIDE SEQUENCE [LARGE SCALE GENOMIC DNA]</scope>
    <source>
        <strain>MG1363</strain>
    </source>
</reference>
<dbReference type="EMBL" id="X76642">
    <property type="protein sequence ID" value="CAA54089.1"/>
    <property type="molecule type" value="Genomic_DNA"/>
</dbReference>
<dbReference type="EMBL" id="AM406671">
    <property type="protein sequence ID" value="CAL98149.1"/>
    <property type="molecule type" value="Genomic_DNA"/>
</dbReference>
<dbReference type="PIR" id="S39342">
    <property type="entry name" value="S39342"/>
</dbReference>
<dbReference type="RefSeq" id="WP_011835408.1">
    <property type="nucleotide sequence ID" value="NC_009004.1"/>
</dbReference>
<dbReference type="SMR" id="P0A3J1"/>
<dbReference type="STRING" id="416870.llmg_1574"/>
<dbReference type="KEGG" id="llm:llmg_1574"/>
<dbReference type="eggNOG" id="COG0443">
    <property type="taxonomic scope" value="Bacteria"/>
</dbReference>
<dbReference type="HOGENOM" id="CLU_005965_2_1_9"/>
<dbReference type="OrthoDB" id="9766019at2"/>
<dbReference type="PhylomeDB" id="P0A3J1"/>
<dbReference type="Proteomes" id="UP000000364">
    <property type="component" value="Chromosome"/>
</dbReference>
<dbReference type="GO" id="GO:0005524">
    <property type="term" value="F:ATP binding"/>
    <property type="evidence" value="ECO:0007669"/>
    <property type="project" value="UniProtKB-UniRule"/>
</dbReference>
<dbReference type="GO" id="GO:0140662">
    <property type="term" value="F:ATP-dependent protein folding chaperone"/>
    <property type="evidence" value="ECO:0007669"/>
    <property type="project" value="InterPro"/>
</dbReference>
<dbReference type="GO" id="GO:0051082">
    <property type="term" value="F:unfolded protein binding"/>
    <property type="evidence" value="ECO:0007669"/>
    <property type="project" value="InterPro"/>
</dbReference>
<dbReference type="CDD" id="cd10234">
    <property type="entry name" value="ASKHA_NBD_HSP70_DnaK-like"/>
    <property type="match status" value="1"/>
</dbReference>
<dbReference type="FunFam" id="2.60.34.10:FF:000014">
    <property type="entry name" value="Chaperone protein DnaK HSP70"/>
    <property type="match status" value="1"/>
</dbReference>
<dbReference type="FunFam" id="1.20.1270.10:FF:000004">
    <property type="entry name" value="Molecular chaperone DnaK"/>
    <property type="match status" value="1"/>
</dbReference>
<dbReference type="FunFam" id="3.30.420.40:FF:000071">
    <property type="entry name" value="Molecular chaperone DnaK"/>
    <property type="match status" value="1"/>
</dbReference>
<dbReference type="FunFam" id="3.90.640.10:FF:000003">
    <property type="entry name" value="Molecular chaperone DnaK"/>
    <property type="match status" value="1"/>
</dbReference>
<dbReference type="Gene3D" id="1.20.1270.10">
    <property type="match status" value="1"/>
</dbReference>
<dbReference type="Gene3D" id="3.30.420.40">
    <property type="match status" value="2"/>
</dbReference>
<dbReference type="Gene3D" id="3.90.640.10">
    <property type="entry name" value="Actin, Chain A, domain 4"/>
    <property type="match status" value="1"/>
</dbReference>
<dbReference type="Gene3D" id="2.60.34.10">
    <property type="entry name" value="Substrate Binding Domain Of DNAk, Chain A, domain 1"/>
    <property type="match status" value="1"/>
</dbReference>
<dbReference type="HAMAP" id="MF_00332">
    <property type="entry name" value="DnaK"/>
    <property type="match status" value="1"/>
</dbReference>
<dbReference type="InterPro" id="IPR043129">
    <property type="entry name" value="ATPase_NBD"/>
</dbReference>
<dbReference type="InterPro" id="IPR012725">
    <property type="entry name" value="Chaperone_DnaK"/>
</dbReference>
<dbReference type="InterPro" id="IPR018181">
    <property type="entry name" value="Heat_shock_70_CS"/>
</dbReference>
<dbReference type="InterPro" id="IPR029048">
    <property type="entry name" value="HSP70_C_sf"/>
</dbReference>
<dbReference type="InterPro" id="IPR029047">
    <property type="entry name" value="HSP70_peptide-bd_sf"/>
</dbReference>
<dbReference type="InterPro" id="IPR013126">
    <property type="entry name" value="Hsp_70_fam"/>
</dbReference>
<dbReference type="NCBIfam" id="NF001413">
    <property type="entry name" value="PRK00290.1"/>
    <property type="match status" value="1"/>
</dbReference>
<dbReference type="NCBIfam" id="TIGR02350">
    <property type="entry name" value="prok_dnaK"/>
    <property type="match status" value="1"/>
</dbReference>
<dbReference type="PANTHER" id="PTHR19375">
    <property type="entry name" value="HEAT SHOCK PROTEIN 70KDA"/>
    <property type="match status" value="1"/>
</dbReference>
<dbReference type="Pfam" id="PF00012">
    <property type="entry name" value="HSP70"/>
    <property type="match status" value="1"/>
</dbReference>
<dbReference type="PRINTS" id="PR00301">
    <property type="entry name" value="HEATSHOCK70"/>
</dbReference>
<dbReference type="SUPFAM" id="SSF53067">
    <property type="entry name" value="Actin-like ATPase domain"/>
    <property type="match status" value="2"/>
</dbReference>
<dbReference type="SUPFAM" id="SSF100934">
    <property type="entry name" value="Heat shock protein 70kD (HSP70), C-terminal subdomain"/>
    <property type="match status" value="1"/>
</dbReference>
<dbReference type="SUPFAM" id="SSF100920">
    <property type="entry name" value="Heat shock protein 70kD (HSP70), peptide-binding domain"/>
    <property type="match status" value="1"/>
</dbReference>
<dbReference type="PROSITE" id="PS00297">
    <property type="entry name" value="HSP70_1"/>
    <property type="match status" value="1"/>
</dbReference>
<dbReference type="PROSITE" id="PS00329">
    <property type="entry name" value="HSP70_2"/>
    <property type="match status" value="1"/>
</dbReference>
<dbReference type="PROSITE" id="PS01036">
    <property type="entry name" value="HSP70_3"/>
    <property type="match status" value="1"/>
</dbReference>
<organism>
    <name type="scientific">Lactococcus lactis subsp. cremoris (strain MG1363)</name>
    <dbReference type="NCBI Taxonomy" id="416870"/>
    <lineage>
        <taxon>Bacteria</taxon>
        <taxon>Bacillati</taxon>
        <taxon>Bacillota</taxon>
        <taxon>Bacilli</taxon>
        <taxon>Lactobacillales</taxon>
        <taxon>Streptococcaceae</taxon>
        <taxon>Lactococcus</taxon>
        <taxon>Lactococcus cremoris subsp. cremoris</taxon>
    </lineage>
</organism>